<reference key="1">
    <citation type="journal article" date="2003" name="Nature">
        <title>Genome sequence of Bacillus cereus and comparative analysis with Bacillus anthracis.</title>
        <authorList>
            <person name="Ivanova N."/>
            <person name="Sorokin A."/>
            <person name="Anderson I."/>
            <person name="Galleron N."/>
            <person name="Candelon B."/>
            <person name="Kapatral V."/>
            <person name="Bhattacharyya A."/>
            <person name="Reznik G."/>
            <person name="Mikhailova N."/>
            <person name="Lapidus A."/>
            <person name="Chu L."/>
            <person name="Mazur M."/>
            <person name="Goltsman E."/>
            <person name="Larsen N."/>
            <person name="D'Souza M."/>
            <person name="Walunas T."/>
            <person name="Grechkin Y."/>
            <person name="Pusch G."/>
            <person name="Haselkorn R."/>
            <person name="Fonstein M."/>
            <person name="Ehrlich S.D."/>
            <person name="Overbeek R."/>
            <person name="Kyrpides N.C."/>
        </authorList>
    </citation>
    <scope>NUCLEOTIDE SEQUENCE [LARGE SCALE GENOMIC DNA]</scope>
    <source>
        <strain>ATCC 14579 / DSM 31 / CCUG 7414 / JCM 2152 / NBRC 15305 / NCIMB 9373 / NCTC 2599 / NRRL B-3711</strain>
    </source>
</reference>
<evidence type="ECO:0000255" key="1">
    <source>
        <dbReference type="HAMAP-Rule" id="MF_00406"/>
    </source>
</evidence>
<name>FABZ_BACCR</name>
<keyword id="KW-0963">Cytoplasm</keyword>
<keyword id="KW-0441">Lipid A biosynthesis</keyword>
<keyword id="KW-0444">Lipid biosynthesis</keyword>
<keyword id="KW-0443">Lipid metabolism</keyword>
<keyword id="KW-0456">Lyase</keyword>
<keyword id="KW-1185">Reference proteome</keyword>
<sequence>MLNIEQIKEIIPHRYPFLLVDKILEVDEGKRAVGIKNVSANEEFFNGHFPDYAVMPGVLIVEALAQVGAVAVLKKEENRGRLAFFAGIDNCRFKKQVRPGDQLRLEVEMTRVRGPIGKGKAIATVDGEVACEAEITFAIGDKKE</sequence>
<gene>
    <name evidence="1" type="primary">fabZ</name>
    <name type="ordered locus">BC_5280</name>
</gene>
<proteinExistence type="inferred from homology"/>
<accession>Q814Y7</accession>
<feature type="chain" id="PRO_0000091636" description="3-hydroxyacyl-[acyl-carrier-protein] dehydratase FabZ">
    <location>
        <begin position="1"/>
        <end position="144"/>
    </location>
</feature>
<feature type="active site" evidence="1">
    <location>
        <position position="48"/>
    </location>
</feature>
<organism>
    <name type="scientific">Bacillus cereus (strain ATCC 14579 / DSM 31 / CCUG 7414 / JCM 2152 / NBRC 15305 / NCIMB 9373 / NCTC 2599 / NRRL B-3711)</name>
    <dbReference type="NCBI Taxonomy" id="226900"/>
    <lineage>
        <taxon>Bacteria</taxon>
        <taxon>Bacillati</taxon>
        <taxon>Bacillota</taxon>
        <taxon>Bacilli</taxon>
        <taxon>Bacillales</taxon>
        <taxon>Bacillaceae</taxon>
        <taxon>Bacillus</taxon>
        <taxon>Bacillus cereus group</taxon>
    </lineage>
</organism>
<comment type="function">
    <text evidence="1">Involved in unsaturated fatty acids biosynthesis. Catalyzes the dehydration of short chain beta-hydroxyacyl-ACPs and long chain saturated and unsaturated beta-hydroxyacyl-ACPs.</text>
</comment>
<comment type="catalytic activity">
    <reaction evidence="1">
        <text>a (3R)-hydroxyacyl-[ACP] = a (2E)-enoyl-[ACP] + H2O</text>
        <dbReference type="Rhea" id="RHEA:13097"/>
        <dbReference type="Rhea" id="RHEA-COMP:9925"/>
        <dbReference type="Rhea" id="RHEA-COMP:9945"/>
        <dbReference type="ChEBI" id="CHEBI:15377"/>
        <dbReference type="ChEBI" id="CHEBI:78784"/>
        <dbReference type="ChEBI" id="CHEBI:78827"/>
        <dbReference type="EC" id="4.2.1.59"/>
    </reaction>
</comment>
<comment type="subcellular location">
    <subcellularLocation>
        <location evidence="1">Cytoplasm</location>
    </subcellularLocation>
</comment>
<comment type="similarity">
    <text evidence="1">Belongs to the thioester dehydratase family. FabZ subfamily.</text>
</comment>
<dbReference type="EC" id="4.2.1.59" evidence="1"/>
<dbReference type="EMBL" id="AE016877">
    <property type="protein sequence ID" value="AAP12144.1"/>
    <property type="molecule type" value="Genomic_DNA"/>
</dbReference>
<dbReference type="RefSeq" id="NP_834943.1">
    <property type="nucleotide sequence ID" value="NC_004722.1"/>
</dbReference>
<dbReference type="RefSeq" id="WP_000931959.1">
    <property type="nucleotide sequence ID" value="NZ_CP138336.1"/>
</dbReference>
<dbReference type="SMR" id="Q814Y7"/>
<dbReference type="STRING" id="226900.BC_5280"/>
<dbReference type="GeneID" id="75088464"/>
<dbReference type="KEGG" id="bce:BC5280"/>
<dbReference type="PATRIC" id="fig|226900.8.peg.5450"/>
<dbReference type="HOGENOM" id="CLU_078912_3_0_9"/>
<dbReference type="OrthoDB" id="9772788at2"/>
<dbReference type="PRO" id="PR:Q814Y7"/>
<dbReference type="Proteomes" id="UP000001417">
    <property type="component" value="Chromosome"/>
</dbReference>
<dbReference type="GO" id="GO:0005737">
    <property type="term" value="C:cytoplasm"/>
    <property type="evidence" value="ECO:0007669"/>
    <property type="project" value="UniProtKB-SubCell"/>
</dbReference>
<dbReference type="GO" id="GO:0016020">
    <property type="term" value="C:membrane"/>
    <property type="evidence" value="ECO:0007669"/>
    <property type="project" value="GOC"/>
</dbReference>
<dbReference type="GO" id="GO:0019171">
    <property type="term" value="F:(3R)-hydroxyacyl-[acyl-carrier-protein] dehydratase activity"/>
    <property type="evidence" value="ECO:0007669"/>
    <property type="project" value="UniProtKB-EC"/>
</dbReference>
<dbReference type="GO" id="GO:0006633">
    <property type="term" value="P:fatty acid biosynthetic process"/>
    <property type="evidence" value="ECO:0007669"/>
    <property type="project" value="UniProtKB-UniRule"/>
</dbReference>
<dbReference type="GO" id="GO:0009245">
    <property type="term" value="P:lipid A biosynthetic process"/>
    <property type="evidence" value="ECO:0007669"/>
    <property type="project" value="UniProtKB-UniRule"/>
</dbReference>
<dbReference type="CDD" id="cd01288">
    <property type="entry name" value="FabZ"/>
    <property type="match status" value="1"/>
</dbReference>
<dbReference type="FunFam" id="3.10.129.10:FF:000001">
    <property type="entry name" value="3-hydroxyacyl-[acyl-carrier-protein] dehydratase FabZ"/>
    <property type="match status" value="1"/>
</dbReference>
<dbReference type="Gene3D" id="3.10.129.10">
    <property type="entry name" value="Hotdog Thioesterase"/>
    <property type="match status" value="1"/>
</dbReference>
<dbReference type="HAMAP" id="MF_00406">
    <property type="entry name" value="FabZ"/>
    <property type="match status" value="1"/>
</dbReference>
<dbReference type="InterPro" id="IPR013114">
    <property type="entry name" value="FabA_FabZ"/>
</dbReference>
<dbReference type="InterPro" id="IPR010084">
    <property type="entry name" value="FabZ"/>
</dbReference>
<dbReference type="InterPro" id="IPR029069">
    <property type="entry name" value="HotDog_dom_sf"/>
</dbReference>
<dbReference type="NCBIfam" id="TIGR01750">
    <property type="entry name" value="fabZ"/>
    <property type="match status" value="1"/>
</dbReference>
<dbReference type="NCBIfam" id="NF000582">
    <property type="entry name" value="PRK00006.1"/>
    <property type="match status" value="1"/>
</dbReference>
<dbReference type="PANTHER" id="PTHR30272">
    <property type="entry name" value="3-HYDROXYACYL-[ACYL-CARRIER-PROTEIN] DEHYDRATASE"/>
    <property type="match status" value="1"/>
</dbReference>
<dbReference type="PANTHER" id="PTHR30272:SF1">
    <property type="entry name" value="3-HYDROXYACYL-[ACYL-CARRIER-PROTEIN] DEHYDRATASE"/>
    <property type="match status" value="1"/>
</dbReference>
<dbReference type="Pfam" id="PF07977">
    <property type="entry name" value="FabA"/>
    <property type="match status" value="1"/>
</dbReference>
<dbReference type="SUPFAM" id="SSF54637">
    <property type="entry name" value="Thioesterase/thiol ester dehydrase-isomerase"/>
    <property type="match status" value="1"/>
</dbReference>
<protein>
    <recommendedName>
        <fullName evidence="1">3-hydroxyacyl-[acyl-carrier-protein] dehydratase FabZ</fullName>
        <ecNumber evidence="1">4.2.1.59</ecNumber>
    </recommendedName>
    <alternativeName>
        <fullName evidence="1">(3R)-hydroxymyristoyl-[acyl-carrier-protein] dehydratase</fullName>
        <shortName evidence="1">(3R)-hydroxymyristoyl-ACP dehydrase</shortName>
    </alternativeName>
    <alternativeName>
        <fullName evidence="1">Beta-hydroxyacyl-ACP dehydratase</fullName>
    </alternativeName>
</protein>